<comment type="function">
    <text>Major structural component of PMF fimbriae.</text>
</comment>
<comment type="subcellular location">
    <subcellularLocation>
        <location>Fimbrium</location>
    </subcellularLocation>
</comment>
<comment type="similarity">
    <text evidence="3">Belongs to the fimbrial protein family.</text>
</comment>
<reference key="1">
    <citation type="journal article" date="1993" name="Infect. Immun.">
        <title>Proteus mirabilis fimbriae: N-terminal amino acid sequence of a major fimbrial subunit and nucleotide sequences of the genes from two strains.</title>
        <authorList>
            <person name="Bahrani F.K."/>
            <person name="Cook S."/>
            <person name="Hull R.A."/>
            <person name="Massad G."/>
            <person name="Mobley H.L.T."/>
        </authorList>
    </citation>
    <scope>NUCLEOTIDE SEQUENCE [GENOMIC DNA]</scope>
    <scope>PROTEIN SEQUENCE OF 23-42</scope>
</reference>
<reference key="2">
    <citation type="journal article" date="1994" name="Gene">
        <title>Genetic organization and complete sequence of the Proteus mirabilis pmf fimbrial operon.</title>
        <authorList>
            <person name="Massad G."/>
            <person name="Mobley H.L.T."/>
        </authorList>
    </citation>
    <scope>NUCLEOTIDE SEQUENCE [GENOMIC DNA]</scope>
</reference>
<reference key="3">
    <citation type="journal article" date="2008" name="J. Bacteriol.">
        <title>Complete genome sequence of uropathogenic Proteus mirabilis, a master of both adherence and motility.</title>
        <authorList>
            <person name="Pearson M.M."/>
            <person name="Sebaihia M."/>
            <person name="Churcher C."/>
            <person name="Quail M.A."/>
            <person name="Seshasayee A.S."/>
            <person name="Luscombe N.M."/>
            <person name="Abdellah Z."/>
            <person name="Arrosmith C."/>
            <person name="Atkin B."/>
            <person name="Chillingworth T."/>
            <person name="Hauser H."/>
            <person name="Jagels K."/>
            <person name="Moule S."/>
            <person name="Mungall K."/>
            <person name="Norbertczak H."/>
            <person name="Rabbinowitsch E."/>
            <person name="Walker D."/>
            <person name="Whithead S."/>
            <person name="Thomson N.R."/>
            <person name="Rather P.N."/>
            <person name="Parkhill J."/>
            <person name="Mobley H.L.T."/>
        </authorList>
    </citation>
    <scope>NUCLEOTIDE SEQUENCE [LARGE SCALE GENOMIC DNA]</scope>
    <source>
        <strain>HI4320</strain>
    </source>
</reference>
<evidence type="ECO:0000250" key="1"/>
<evidence type="ECO:0000269" key="2">
    <source>
    </source>
</evidence>
<evidence type="ECO:0000305" key="3"/>
<organism>
    <name type="scientific">Proteus mirabilis (strain HI4320)</name>
    <dbReference type="NCBI Taxonomy" id="529507"/>
    <lineage>
        <taxon>Bacteria</taxon>
        <taxon>Pseudomonadati</taxon>
        <taxon>Pseudomonadota</taxon>
        <taxon>Gammaproteobacteria</taxon>
        <taxon>Enterobacterales</taxon>
        <taxon>Morganellaceae</taxon>
        <taxon>Proteus</taxon>
    </lineage>
</organism>
<protein>
    <recommendedName>
        <fullName>Major fimbrial subunit</fullName>
    </recommendedName>
</protein>
<proteinExistence type="evidence at protein level"/>
<feature type="signal peptide" evidence="2">
    <location>
        <begin position="1"/>
        <end position="22"/>
    </location>
</feature>
<feature type="chain" id="PRO_0000009232" description="Major fimbrial subunit">
    <location>
        <begin position="23"/>
        <end position="184"/>
    </location>
</feature>
<feature type="disulfide bond" evidence="1">
    <location>
        <begin position="49"/>
        <end position="88"/>
    </location>
</feature>
<feature type="sequence variant" description="In strain: HU1069.">
    <original>L</original>
    <variation>Q</variation>
    <location>
        <position position="73"/>
    </location>
</feature>
<sequence length="184" mass="18922">MKLSKIALAAALVFGINSVATAENETPAPKVSSTKGEIQLKGEIVNSACGLAASSSPVIVDFSEIPTSALANLQKAGNIKKDIELQDCDTTVAKTATVSYTPSVVNAVNKDLASFVSGNASGAGIGLMDAGSKAVKWNTATTPVQLINGVSKIPFVAYVQAESADAKVTPGEFQAVINFQVDYQ</sequence>
<gene>
    <name type="primary">pmfA</name>
    <name type="ordered locus">PMI1877</name>
</gene>
<name>PMFA_PROMH</name>
<keyword id="KW-0903">Direct protein sequencing</keyword>
<keyword id="KW-1015">Disulfide bond</keyword>
<keyword id="KW-0281">Fimbrium</keyword>
<keyword id="KW-1185">Reference proteome</keyword>
<keyword id="KW-0732">Signal</keyword>
<dbReference type="EMBL" id="Z19553">
    <property type="protein sequence ID" value="CAA79612.1"/>
    <property type="molecule type" value="Genomic_DNA"/>
</dbReference>
<dbReference type="EMBL" id="Z35428">
    <property type="protein sequence ID" value="CAA84589.1"/>
    <property type="molecule type" value="Genomic_DNA"/>
</dbReference>
<dbReference type="EMBL" id="AM942759">
    <property type="protein sequence ID" value="CAR43895.1"/>
    <property type="molecule type" value="Genomic_DNA"/>
</dbReference>
<dbReference type="PIR" id="B49239">
    <property type="entry name" value="B49239"/>
</dbReference>
<dbReference type="RefSeq" id="WP_004243875.1">
    <property type="nucleotide sequence ID" value="NC_010554.1"/>
</dbReference>
<dbReference type="SMR" id="Q04681"/>
<dbReference type="DNASU" id="6802017"/>
<dbReference type="EnsemblBacteria" id="CAR43895">
    <property type="protein sequence ID" value="CAR43895"/>
    <property type="gene ID" value="PMI1877"/>
</dbReference>
<dbReference type="GeneID" id="6802017"/>
<dbReference type="KEGG" id="pmr:PMI1877"/>
<dbReference type="eggNOG" id="COG3539">
    <property type="taxonomic scope" value="Bacteria"/>
</dbReference>
<dbReference type="HOGENOM" id="CLU_088965_3_4_6"/>
<dbReference type="Proteomes" id="UP000008319">
    <property type="component" value="Chromosome"/>
</dbReference>
<dbReference type="GO" id="GO:0009289">
    <property type="term" value="C:pilus"/>
    <property type="evidence" value="ECO:0007669"/>
    <property type="project" value="UniProtKB-SubCell"/>
</dbReference>
<dbReference type="GO" id="GO:0043709">
    <property type="term" value="P:cell adhesion involved in single-species biofilm formation"/>
    <property type="evidence" value="ECO:0007669"/>
    <property type="project" value="TreeGrafter"/>
</dbReference>
<dbReference type="Gene3D" id="2.60.40.1090">
    <property type="entry name" value="Fimbrial-type adhesion domain"/>
    <property type="match status" value="1"/>
</dbReference>
<dbReference type="InterPro" id="IPR000259">
    <property type="entry name" value="Adhesion_dom_fimbrial"/>
</dbReference>
<dbReference type="InterPro" id="IPR036937">
    <property type="entry name" value="Adhesion_dom_fimbrial_sf"/>
</dbReference>
<dbReference type="InterPro" id="IPR008966">
    <property type="entry name" value="Adhesion_dom_sf"/>
</dbReference>
<dbReference type="InterPro" id="IPR050263">
    <property type="entry name" value="Bact_Fimbrial_Adh_Pro"/>
</dbReference>
<dbReference type="PANTHER" id="PTHR33420">
    <property type="entry name" value="FIMBRIAL SUBUNIT ELFA-RELATED"/>
    <property type="match status" value="1"/>
</dbReference>
<dbReference type="PANTHER" id="PTHR33420:SF12">
    <property type="entry name" value="FIMBRIN-LIKE PROTEIN FIMI-RELATED"/>
    <property type="match status" value="1"/>
</dbReference>
<dbReference type="Pfam" id="PF00419">
    <property type="entry name" value="Fimbrial"/>
    <property type="match status" value="1"/>
</dbReference>
<dbReference type="SUPFAM" id="SSF49401">
    <property type="entry name" value="Bacterial adhesins"/>
    <property type="match status" value="1"/>
</dbReference>
<accession>Q04681</accession>
<accession>B4F036</accession>